<sequence>MLKIFNTMSRQKEEFKPIHAGEVGMYVCGITVYDLCHIGHGRTFIAFDVVARYLRFLGYKLKYVRNITDIDDKIIKRANENGEDFVALVDRMVTEMHKDFDALNILRPDSEPRATQHIPEIIEIVEQLIARGHAYVAGNGDVMFAVESDADYGKLSRQDLEQLQAGARVEVADSKRNPMDFVLWKMSKPGEPSWPSPWGDGRPGWHIECSAMNCKQLGSHFDIHGGGSDLMFPHHENEIAQSTCAHDGEYVNYWMHSGMVMVDREKMSKSLGNFFTVRDVLQHYDAETVRYFLMSGHYRSQLNYSEENLKQARASLERLYTALRGTDASATVAGGEAFEARFVEAMNDDFNTPEAYSVLFDMAREVNRLKAEDSSAANQLAAHLRKLAAVLGLLEQEPEQFLQSGAQANDDEVAEIEALIVKRLEARKAKDWAAADAARDRLNEMGIILEDGPQGTTWRRK</sequence>
<evidence type="ECO:0000255" key="1">
    <source>
        <dbReference type="HAMAP-Rule" id="MF_00041"/>
    </source>
</evidence>
<evidence type="ECO:0000305" key="2"/>
<gene>
    <name evidence="1" type="primary">cysS</name>
    <name type="ordered locus">ESA_02760</name>
</gene>
<protein>
    <recommendedName>
        <fullName evidence="1">Cysteine--tRNA ligase</fullName>
        <ecNumber evidence="1">6.1.1.16</ecNumber>
    </recommendedName>
    <alternativeName>
        <fullName evidence="1">Cysteinyl-tRNA synthetase</fullName>
        <shortName evidence="1">CysRS</shortName>
    </alternativeName>
</protein>
<accession>A7MK00</accession>
<reference key="1">
    <citation type="journal article" date="2010" name="PLoS ONE">
        <title>Genome sequence of Cronobacter sakazakii BAA-894 and comparative genomic hybridization analysis with other Cronobacter species.</title>
        <authorList>
            <person name="Kucerova E."/>
            <person name="Clifton S.W."/>
            <person name="Xia X.Q."/>
            <person name="Long F."/>
            <person name="Porwollik S."/>
            <person name="Fulton L."/>
            <person name="Fronick C."/>
            <person name="Minx P."/>
            <person name="Kyung K."/>
            <person name="Warren W."/>
            <person name="Fulton R."/>
            <person name="Feng D."/>
            <person name="Wollam A."/>
            <person name="Shah N."/>
            <person name="Bhonagiri V."/>
            <person name="Nash W.E."/>
            <person name="Hallsworth-Pepin K."/>
            <person name="Wilson R.K."/>
            <person name="McClelland M."/>
            <person name="Forsythe S.J."/>
        </authorList>
    </citation>
    <scope>NUCLEOTIDE SEQUENCE [LARGE SCALE GENOMIC DNA]</scope>
    <source>
        <strain>ATCC BAA-894</strain>
    </source>
</reference>
<organism>
    <name type="scientific">Cronobacter sakazakii (strain ATCC BAA-894)</name>
    <name type="common">Enterobacter sakazakii</name>
    <dbReference type="NCBI Taxonomy" id="290339"/>
    <lineage>
        <taxon>Bacteria</taxon>
        <taxon>Pseudomonadati</taxon>
        <taxon>Pseudomonadota</taxon>
        <taxon>Gammaproteobacteria</taxon>
        <taxon>Enterobacterales</taxon>
        <taxon>Enterobacteriaceae</taxon>
        <taxon>Cronobacter</taxon>
    </lineage>
</organism>
<proteinExistence type="inferred from homology"/>
<dbReference type="EC" id="6.1.1.16" evidence="1"/>
<dbReference type="EMBL" id="CP000783">
    <property type="protein sequence ID" value="ABU77991.1"/>
    <property type="status" value="ALT_INIT"/>
    <property type="molecule type" value="Genomic_DNA"/>
</dbReference>
<dbReference type="RefSeq" id="WP_041460582.1">
    <property type="nucleotide sequence ID" value="NC_009778.1"/>
</dbReference>
<dbReference type="SMR" id="A7MK00"/>
<dbReference type="KEGG" id="esa:ESA_02760"/>
<dbReference type="PATRIC" id="fig|290339.8.peg.2456"/>
<dbReference type="HOGENOM" id="CLU_013528_0_1_6"/>
<dbReference type="Proteomes" id="UP000000260">
    <property type="component" value="Chromosome"/>
</dbReference>
<dbReference type="GO" id="GO:0005829">
    <property type="term" value="C:cytosol"/>
    <property type="evidence" value="ECO:0007669"/>
    <property type="project" value="TreeGrafter"/>
</dbReference>
<dbReference type="GO" id="GO:0005524">
    <property type="term" value="F:ATP binding"/>
    <property type="evidence" value="ECO:0007669"/>
    <property type="project" value="UniProtKB-UniRule"/>
</dbReference>
<dbReference type="GO" id="GO:0004817">
    <property type="term" value="F:cysteine-tRNA ligase activity"/>
    <property type="evidence" value="ECO:0007669"/>
    <property type="project" value="UniProtKB-UniRule"/>
</dbReference>
<dbReference type="GO" id="GO:0008270">
    <property type="term" value="F:zinc ion binding"/>
    <property type="evidence" value="ECO:0007669"/>
    <property type="project" value="UniProtKB-UniRule"/>
</dbReference>
<dbReference type="GO" id="GO:0006423">
    <property type="term" value="P:cysteinyl-tRNA aminoacylation"/>
    <property type="evidence" value="ECO:0007669"/>
    <property type="project" value="UniProtKB-UniRule"/>
</dbReference>
<dbReference type="CDD" id="cd07963">
    <property type="entry name" value="Anticodon_Ia_Cys"/>
    <property type="match status" value="1"/>
</dbReference>
<dbReference type="CDD" id="cd00672">
    <property type="entry name" value="CysRS_core"/>
    <property type="match status" value="1"/>
</dbReference>
<dbReference type="FunFam" id="1.20.120.1910:FF:000001">
    <property type="entry name" value="Cysteine--tRNA ligase"/>
    <property type="match status" value="1"/>
</dbReference>
<dbReference type="FunFam" id="3.40.50.620:FF:000009">
    <property type="entry name" value="Cysteine--tRNA ligase"/>
    <property type="match status" value="1"/>
</dbReference>
<dbReference type="Gene3D" id="1.20.120.1910">
    <property type="entry name" value="Cysteine-tRNA ligase, C-terminal anti-codon recognition domain"/>
    <property type="match status" value="1"/>
</dbReference>
<dbReference type="Gene3D" id="3.40.50.620">
    <property type="entry name" value="HUPs"/>
    <property type="match status" value="1"/>
</dbReference>
<dbReference type="HAMAP" id="MF_00041">
    <property type="entry name" value="Cys_tRNA_synth"/>
    <property type="match status" value="1"/>
</dbReference>
<dbReference type="InterPro" id="IPR015803">
    <property type="entry name" value="Cys-tRNA-ligase"/>
</dbReference>
<dbReference type="InterPro" id="IPR015273">
    <property type="entry name" value="Cys-tRNA-synt_Ia_DALR"/>
</dbReference>
<dbReference type="InterPro" id="IPR024909">
    <property type="entry name" value="Cys-tRNA/MSH_ligase"/>
</dbReference>
<dbReference type="InterPro" id="IPR056411">
    <property type="entry name" value="CysS_C"/>
</dbReference>
<dbReference type="InterPro" id="IPR014729">
    <property type="entry name" value="Rossmann-like_a/b/a_fold"/>
</dbReference>
<dbReference type="InterPro" id="IPR032678">
    <property type="entry name" value="tRNA-synt_1_cat_dom"/>
</dbReference>
<dbReference type="InterPro" id="IPR009080">
    <property type="entry name" value="tRNAsynth_Ia_anticodon-bd"/>
</dbReference>
<dbReference type="NCBIfam" id="TIGR00435">
    <property type="entry name" value="cysS"/>
    <property type="match status" value="1"/>
</dbReference>
<dbReference type="PANTHER" id="PTHR10890:SF3">
    <property type="entry name" value="CYSTEINE--TRNA LIGASE, CYTOPLASMIC"/>
    <property type="match status" value="1"/>
</dbReference>
<dbReference type="PANTHER" id="PTHR10890">
    <property type="entry name" value="CYSTEINYL-TRNA SYNTHETASE"/>
    <property type="match status" value="1"/>
</dbReference>
<dbReference type="Pfam" id="PF23493">
    <property type="entry name" value="CysS_C"/>
    <property type="match status" value="1"/>
</dbReference>
<dbReference type="Pfam" id="PF09190">
    <property type="entry name" value="DALR_2"/>
    <property type="match status" value="1"/>
</dbReference>
<dbReference type="Pfam" id="PF01406">
    <property type="entry name" value="tRNA-synt_1e"/>
    <property type="match status" value="1"/>
</dbReference>
<dbReference type="PRINTS" id="PR00983">
    <property type="entry name" value="TRNASYNTHCYS"/>
</dbReference>
<dbReference type="SMART" id="SM00840">
    <property type="entry name" value="DALR_2"/>
    <property type="match status" value="1"/>
</dbReference>
<dbReference type="SUPFAM" id="SSF47323">
    <property type="entry name" value="Anticodon-binding domain of a subclass of class I aminoacyl-tRNA synthetases"/>
    <property type="match status" value="1"/>
</dbReference>
<dbReference type="SUPFAM" id="SSF52374">
    <property type="entry name" value="Nucleotidylyl transferase"/>
    <property type="match status" value="1"/>
</dbReference>
<comment type="catalytic activity">
    <reaction evidence="1">
        <text>tRNA(Cys) + L-cysteine + ATP = L-cysteinyl-tRNA(Cys) + AMP + diphosphate</text>
        <dbReference type="Rhea" id="RHEA:17773"/>
        <dbReference type="Rhea" id="RHEA-COMP:9661"/>
        <dbReference type="Rhea" id="RHEA-COMP:9679"/>
        <dbReference type="ChEBI" id="CHEBI:30616"/>
        <dbReference type="ChEBI" id="CHEBI:33019"/>
        <dbReference type="ChEBI" id="CHEBI:35235"/>
        <dbReference type="ChEBI" id="CHEBI:78442"/>
        <dbReference type="ChEBI" id="CHEBI:78517"/>
        <dbReference type="ChEBI" id="CHEBI:456215"/>
        <dbReference type="EC" id="6.1.1.16"/>
    </reaction>
</comment>
<comment type="cofactor">
    <cofactor evidence="1">
        <name>Zn(2+)</name>
        <dbReference type="ChEBI" id="CHEBI:29105"/>
    </cofactor>
    <text evidence="1">Binds 1 zinc ion per subunit.</text>
</comment>
<comment type="subunit">
    <text evidence="1">Monomer.</text>
</comment>
<comment type="subcellular location">
    <subcellularLocation>
        <location evidence="1">Cytoplasm</location>
    </subcellularLocation>
</comment>
<comment type="similarity">
    <text evidence="1">Belongs to the class-I aminoacyl-tRNA synthetase family.</text>
</comment>
<comment type="sequence caution" evidence="2">
    <conflict type="erroneous initiation">
        <sequence resource="EMBL-CDS" id="ABU77991"/>
    </conflict>
</comment>
<keyword id="KW-0030">Aminoacyl-tRNA synthetase</keyword>
<keyword id="KW-0067">ATP-binding</keyword>
<keyword id="KW-0963">Cytoplasm</keyword>
<keyword id="KW-0436">Ligase</keyword>
<keyword id="KW-0479">Metal-binding</keyword>
<keyword id="KW-0547">Nucleotide-binding</keyword>
<keyword id="KW-0648">Protein biosynthesis</keyword>
<keyword id="KW-1185">Reference proteome</keyword>
<keyword id="KW-0862">Zinc</keyword>
<name>SYC_CROS8</name>
<feature type="chain" id="PRO_1000006585" description="Cysteine--tRNA ligase">
    <location>
        <begin position="1"/>
        <end position="461"/>
    </location>
</feature>
<feature type="short sequence motif" description="'HIGH' region">
    <location>
        <begin position="30"/>
        <end position="40"/>
    </location>
</feature>
<feature type="short sequence motif" description="'KMSKS' region">
    <location>
        <begin position="266"/>
        <end position="270"/>
    </location>
</feature>
<feature type="binding site" evidence="1">
    <location>
        <position position="28"/>
    </location>
    <ligand>
        <name>Zn(2+)</name>
        <dbReference type="ChEBI" id="CHEBI:29105"/>
    </ligand>
</feature>
<feature type="binding site" evidence="1">
    <location>
        <position position="209"/>
    </location>
    <ligand>
        <name>Zn(2+)</name>
        <dbReference type="ChEBI" id="CHEBI:29105"/>
    </ligand>
</feature>
<feature type="binding site" evidence="1">
    <location>
        <position position="234"/>
    </location>
    <ligand>
        <name>Zn(2+)</name>
        <dbReference type="ChEBI" id="CHEBI:29105"/>
    </ligand>
</feature>
<feature type="binding site" evidence="1">
    <location>
        <position position="238"/>
    </location>
    <ligand>
        <name>Zn(2+)</name>
        <dbReference type="ChEBI" id="CHEBI:29105"/>
    </ligand>
</feature>
<feature type="binding site" evidence="1">
    <location>
        <position position="269"/>
    </location>
    <ligand>
        <name>ATP</name>
        <dbReference type="ChEBI" id="CHEBI:30616"/>
    </ligand>
</feature>